<dbReference type="EMBL" id="CP000857">
    <property type="protein sequence ID" value="ACN48050.1"/>
    <property type="molecule type" value="Genomic_DNA"/>
</dbReference>
<dbReference type="RefSeq" id="WP_001096676.1">
    <property type="nucleotide sequence ID" value="NC_012125.1"/>
</dbReference>
<dbReference type="SMR" id="C0Q2R4"/>
<dbReference type="KEGG" id="sei:SPC_3982"/>
<dbReference type="HOGENOM" id="CLU_062853_0_0_6"/>
<dbReference type="Proteomes" id="UP000001599">
    <property type="component" value="Chromosome"/>
</dbReference>
<dbReference type="GO" id="GO:0022625">
    <property type="term" value="C:cytosolic large ribosomal subunit"/>
    <property type="evidence" value="ECO:0007669"/>
    <property type="project" value="TreeGrafter"/>
</dbReference>
<dbReference type="GO" id="GO:0019843">
    <property type="term" value="F:rRNA binding"/>
    <property type="evidence" value="ECO:0007669"/>
    <property type="project" value="UniProtKB-UniRule"/>
</dbReference>
<dbReference type="GO" id="GO:0003735">
    <property type="term" value="F:structural constituent of ribosome"/>
    <property type="evidence" value="ECO:0007669"/>
    <property type="project" value="InterPro"/>
</dbReference>
<dbReference type="GO" id="GO:0000049">
    <property type="term" value="F:tRNA binding"/>
    <property type="evidence" value="ECO:0007669"/>
    <property type="project" value="UniProtKB-KW"/>
</dbReference>
<dbReference type="GO" id="GO:0006417">
    <property type="term" value="P:regulation of translation"/>
    <property type="evidence" value="ECO:0007669"/>
    <property type="project" value="UniProtKB-KW"/>
</dbReference>
<dbReference type="GO" id="GO:0006412">
    <property type="term" value="P:translation"/>
    <property type="evidence" value="ECO:0007669"/>
    <property type="project" value="UniProtKB-UniRule"/>
</dbReference>
<dbReference type="CDD" id="cd00403">
    <property type="entry name" value="Ribosomal_L1"/>
    <property type="match status" value="1"/>
</dbReference>
<dbReference type="FunFam" id="3.40.50.790:FF:000001">
    <property type="entry name" value="50S ribosomal protein L1"/>
    <property type="match status" value="1"/>
</dbReference>
<dbReference type="Gene3D" id="3.30.190.20">
    <property type="match status" value="1"/>
</dbReference>
<dbReference type="Gene3D" id="3.40.50.790">
    <property type="match status" value="1"/>
</dbReference>
<dbReference type="HAMAP" id="MF_01318_B">
    <property type="entry name" value="Ribosomal_uL1_B"/>
    <property type="match status" value="1"/>
</dbReference>
<dbReference type="InterPro" id="IPR005878">
    <property type="entry name" value="Ribosom_uL1_bac-type"/>
</dbReference>
<dbReference type="InterPro" id="IPR002143">
    <property type="entry name" value="Ribosomal_uL1"/>
</dbReference>
<dbReference type="InterPro" id="IPR023674">
    <property type="entry name" value="Ribosomal_uL1-like"/>
</dbReference>
<dbReference type="InterPro" id="IPR028364">
    <property type="entry name" value="Ribosomal_uL1/biogenesis"/>
</dbReference>
<dbReference type="InterPro" id="IPR016095">
    <property type="entry name" value="Ribosomal_uL1_3-a/b-sand"/>
</dbReference>
<dbReference type="InterPro" id="IPR023673">
    <property type="entry name" value="Ribosomal_uL1_CS"/>
</dbReference>
<dbReference type="NCBIfam" id="TIGR01169">
    <property type="entry name" value="rplA_bact"/>
    <property type="match status" value="1"/>
</dbReference>
<dbReference type="PANTHER" id="PTHR36427">
    <property type="entry name" value="54S RIBOSOMAL PROTEIN L1, MITOCHONDRIAL"/>
    <property type="match status" value="1"/>
</dbReference>
<dbReference type="PANTHER" id="PTHR36427:SF3">
    <property type="entry name" value="LARGE RIBOSOMAL SUBUNIT PROTEIN UL1M"/>
    <property type="match status" value="1"/>
</dbReference>
<dbReference type="Pfam" id="PF00687">
    <property type="entry name" value="Ribosomal_L1"/>
    <property type="match status" value="1"/>
</dbReference>
<dbReference type="PIRSF" id="PIRSF002155">
    <property type="entry name" value="Ribosomal_L1"/>
    <property type="match status" value="1"/>
</dbReference>
<dbReference type="SUPFAM" id="SSF56808">
    <property type="entry name" value="Ribosomal protein L1"/>
    <property type="match status" value="1"/>
</dbReference>
<dbReference type="PROSITE" id="PS01199">
    <property type="entry name" value="RIBOSOMAL_L1"/>
    <property type="match status" value="1"/>
</dbReference>
<gene>
    <name evidence="1" type="primary">rplA</name>
    <name type="ordered locus">SPC_3982</name>
</gene>
<comment type="function">
    <text evidence="1">Binds directly to 23S rRNA. The L1 stalk is quite mobile in the ribosome, and is involved in E site tRNA release.</text>
</comment>
<comment type="function">
    <text evidence="1">Protein L1 is also a translational repressor protein, it controls the translation of the L11 operon by binding to its mRNA.</text>
</comment>
<comment type="subunit">
    <text evidence="1">Part of the 50S ribosomal subunit.</text>
</comment>
<comment type="similarity">
    <text evidence="1">Belongs to the universal ribosomal protein uL1 family.</text>
</comment>
<organism>
    <name type="scientific">Salmonella paratyphi C (strain RKS4594)</name>
    <dbReference type="NCBI Taxonomy" id="476213"/>
    <lineage>
        <taxon>Bacteria</taxon>
        <taxon>Pseudomonadati</taxon>
        <taxon>Pseudomonadota</taxon>
        <taxon>Gammaproteobacteria</taxon>
        <taxon>Enterobacterales</taxon>
        <taxon>Enterobacteriaceae</taxon>
        <taxon>Salmonella</taxon>
    </lineage>
</organism>
<feature type="chain" id="PRO_1000165697" description="Large ribosomal subunit protein uL1">
    <location>
        <begin position="1"/>
        <end position="234"/>
    </location>
</feature>
<protein>
    <recommendedName>
        <fullName evidence="1">Large ribosomal subunit protein uL1</fullName>
    </recommendedName>
    <alternativeName>
        <fullName evidence="2">50S ribosomal protein L1</fullName>
    </alternativeName>
</protein>
<proteinExistence type="inferred from homology"/>
<accession>C0Q2R4</accession>
<evidence type="ECO:0000255" key="1">
    <source>
        <dbReference type="HAMAP-Rule" id="MF_01318"/>
    </source>
</evidence>
<evidence type="ECO:0000305" key="2"/>
<keyword id="KW-0678">Repressor</keyword>
<keyword id="KW-0687">Ribonucleoprotein</keyword>
<keyword id="KW-0689">Ribosomal protein</keyword>
<keyword id="KW-0694">RNA-binding</keyword>
<keyword id="KW-0699">rRNA-binding</keyword>
<keyword id="KW-0810">Translation regulation</keyword>
<keyword id="KW-0820">tRNA-binding</keyword>
<name>RL1_SALPC</name>
<sequence>MAKLTKRMRVIREKVDATKQYDINEAIALLKELATAKFNESVDVAVNLGIDARKSDQNVRGATVLPHGTGRSVRVAVFTQGPNAEAAKAAGAELVGMEDLADQIKKGEMNFDVVIASPDAMRVVGQLGQVLGPRGLMPNPKVGTVTPNVAEAVKNAKAGQVRYRNDKNGIIHTTIGKVDFDADKLKENLEALLVALKKAKPSQAKGVYIKKVSISTTMGAGVAVDQAGLSASAN</sequence>
<reference key="1">
    <citation type="journal article" date="2009" name="PLoS ONE">
        <title>Salmonella paratyphi C: genetic divergence from Salmonella choleraesuis and pathogenic convergence with Salmonella typhi.</title>
        <authorList>
            <person name="Liu W.-Q."/>
            <person name="Feng Y."/>
            <person name="Wang Y."/>
            <person name="Zou Q.-H."/>
            <person name="Chen F."/>
            <person name="Guo J.-T."/>
            <person name="Peng Y.-H."/>
            <person name="Jin Y."/>
            <person name="Li Y.-G."/>
            <person name="Hu S.-N."/>
            <person name="Johnston R.N."/>
            <person name="Liu G.-R."/>
            <person name="Liu S.-L."/>
        </authorList>
    </citation>
    <scope>NUCLEOTIDE SEQUENCE [LARGE SCALE GENOMIC DNA]</scope>
    <source>
        <strain>RKS4594</strain>
    </source>
</reference>